<keyword id="KW-0067">ATP-binding</keyword>
<keyword id="KW-0963">Cytoplasm</keyword>
<keyword id="KW-0418">Kinase</keyword>
<keyword id="KW-0545">Nucleotide biosynthesis</keyword>
<keyword id="KW-0547">Nucleotide-binding</keyword>
<keyword id="KW-0808">Transferase</keyword>
<protein>
    <recommendedName>
        <fullName evidence="1">Adenylate kinase</fullName>
        <shortName evidence="1">AK</shortName>
        <ecNumber evidence="1">2.7.4.3</ecNumber>
    </recommendedName>
    <alternativeName>
        <fullName evidence="1">ATP-AMP transphosphorylase</fullName>
    </alternativeName>
    <alternativeName>
        <fullName evidence="1">ATP:AMP phosphotransferase</fullName>
    </alternativeName>
    <alternativeName>
        <fullName evidence="1">Adenylate monophosphate kinase</fullName>
    </alternativeName>
</protein>
<evidence type="ECO:0000255" key="1">
    <source>
        <dbReference type="HAMAP-Rule" id="MF_00235"/>
    </source>
</evidence>
<accession>A9IVZ9</accession>
<gene>
    <name evidence="1" type="primary">adk</name>
    <name type="ordered locus">BT_1497</name>
</gene>
<sequence>MRVVLLGPPGAGKGTQAKMLTEEYNIPHLSTGDMLREVIAKETEVGKKAKAIISSGALVPDSIVNQIVSDRIDEADCINGFILDGYPRTVGQAEALQQILESKNMRLDAVIELCVNEDALIERMERRVQETVAAGGQVRLDDNPVAFAKRLVEYREKTSPLSKFYSERGMLKVIDGMIGIAEVTRIIKGFLS</sequence>
<dbReference type="EC" id="2.7.4.3" evidence="1"/>
<dbReference type="EMBL" id="AM260525">
    <property type="protein sequence ID" value="CAK01843.1"/>
    <property type="molecule type" value="Genomic_DNA"/>
</dbReference>
<dbReference type="RefSeq" id="WP_012231982.1">
    <property type="nucleotide sequence ID" value="NC_010161.1"/>
</dbReference>
<dbReference type="SMR" id="A9IVZ9"/>
<dbReference type="KEGG" id="btr:BT_1497"/>
<dbReference type="eggNOG" id="COG0563">
    <property type="taxonomic scope" value="Bacteria"/>
</dbReference>
<dbReference type="HOGENOM" id="CLU_032354_4_1_5"/>
<dbReference type="UniPathway" id="UPA00588">
    <property type="reaction ID" value="UER00649"/>
</dbReference>
<dbReference type="Proteomes" id="UP000001592">
    <property type="component" value="Chromosome"/>
</dbReference>
<dbReference type="GO" id="GO:0005737">
    <property type="term" value="C:cytoplasm"/>
    <property type="evidence" value="ECO:0007669"/>
    <property type="project" value="UniProtKB-SubCell"/>
</dbReference>
<dbReference type="GO" id="GO:0004017">
    <property type="term" value="F:adenylate kinase activity"/>
    <property type="evidence" value="ECO:0007669"/>
    <property type="project" value="UniProtKB-UniRule"/>
</dbReference>
<dbReference type="GO" id="GO:0005524">
    <property type="term" value="F:ATP binding"/>
    <property type="evidence" value="ECO:0007669"/>
    <property type="project" value="UniProtKB-UniRule"/>
</dbReference>
<dbReference type="GO" id="GO:0044209">
    <property type="term" value="P:AMP salvage"/>
    <property type="evidence" value="ECO:0007669"/>
    <property type="project" value="UniProtKB-UniRule"/>
</dbReference>
<dbReference type="CDD" id="cd01428">
    <property type="entry name" value="ADK"/>
    <property type="match status" value="1"/>
</dbReference>
<dbReference type="Gene3D" id="3.40.50.300">
    <property type="entry name" value="P-loop containing nucleotide triphosphate hydrolases"/>
    <property type="match status" value="1"/>
</dbReference>
<dbReference type="HAMAP" id="MF_00235">
    <property type="entry name" value="Adenylate_kinase_Adk"/>
    <property type="match status" value="1"/>
</dbReference>
<dbReference type="InterPro" id="IPR006259">
    <property type="entry name" value="Adenyl_kin_sub"/>
</dbReference>
<dbReference type="InterPro" id="IPR000850">
    <property type="entry name" value="Adenylat/UMP-CMP_kin"/>
</dbReference>
<dbReference type="InterPro" id="IPR033690">
    <property type="entry name" value="Adenylat_kinase_CS"/>
</dbReference>
<dbReference type="InterPro" id="IPR027417">
    <property type="entry name" value="P-loop_NTPase"/>
</dbReference>
<dbReference type="NCBIfam" id="TIGR01351">
    <property type="entry name" value="adk"/>
    <property type="match status" value="1"/>
</dbReference>
<dbReference type="NCBIfam" id="NF001381">
    <property type="entry name" value="PRK00279.1-3"/>
    <property type="match status" value="1"/>
</dbReference>
<dbReference type="NCBIfam" id="NF011100">
    <property type="entry name" value="PRK14527.1"/>
    <property type="match status" value="1"/>
</dbReference>
<dbReference type="NCBIfam" id="NF011105">
    <property type="entry name" value="PRK14532.1"/>
    <property type="match status" value="1"/>
</dbReference>
<dbReference type="PANTHER" id="PTHR23359">
    <property type="entry name" value="NUCLEOTIDE KINASE"/>
    <property type="match status" value="1"/>
</dbReference>
<dbReference type="Pfam" id="PF00406">
    <property type="entry name" value="ADK"/>
    <property type="match status" value="1"/>
</dbReference>
<dbReference type="PRINTS" id="PR00094">
    <property type="entry name" value="ADENYLTKNASE"/>
</dbReference>
<dbReference type="SUPFAM" id="SSF52540">
    <property type="entry name" value="P-loop containing nucleoside triphosphate hydrolases"/>
    <property type="match status" value="1"/>
</dbReference>
<dbReference type="PROSITE" id="PS00113">
    <property type="entry name" value="ADENYLATE_KINASE"/>
    <property type="match status" value="1"/>
</dbReference>
<feature type="chain" id="PRO_1000078263" description="Adenylate kinase">
    <location>
        <begin position="1"/>
        <end position="192"/>
    </location>
</feature>
<feature type="region of interest" description="NMP" evidence="1">
    <location>
        <begin position="30"/>
        <end position="59"/>
    </location>
</feature>
<feature type="region of interest" description="LID" evidence="1">
    <location>
        <begin position="126"/>
        <end position="142"/>
    </location>
</feature>
<feature type="binding site" evidence="1">
    <location>
        <begin position="10"/>
        <end position="15"/>
    </location>
    <ligand>
        <name>ATP</name>
        <dbReference type="ChEBI" id="CHEBI:30616"/>
    </ligand>
</feature>
<feature type="binding site" evidence="1">
    <location>
        <position position="31"/>
    </location>
    <ligand>
        <name>AMP</name>
        <dbReference type="ChEBI" id="CHEBI:456215"/>
    </ligand>
</feature>
<feature type="binding site" evidence="1">
    <location>
        <position position="36"/>
    </location>
    <ligand>
        <name>AMP</name>
        <dbReference type="ChEBI" id="CHEBI:456215"/>
    </ligand>
</feature>
<feature type="binding site" evidence="1">
    <location>
        <begin position="57"/>
        <end position="59"/>
    </location>
    <ligand>
        <name>AMP</name>
        <dbReference type="ChEBI" id="CHEBI:456215"/>
    </ligand>
</feature>
<feature type="binding site" evidence="1">
    <location>
        <begin position="85"/>
        <end position="88"/>
    </location>
    <ligand>
        <name>AMP</name>
        <dbReference type="ChEBI" id="CHEBI:456215"/>
    </ligand>
</feature>
<feature type="binding site" evidence="1">
    <location>
        <position position="92"/>
    </location>
    <ligand>
        <name>AMP</name>
        <dbReference type="ChEBI" id="CHEBI:456215"/>
    </ligand>
</feature>
<feature type="binding site" evidence="1">
    <location>
        <position position="127"/>
    </location>
    <ligand>
        <name>ATP</name>
        <dbReference type="ChEBI" id="CHEBI:30616"/>
    </ligand>
</feature>
<feature type="binding site" evidence="1">
    <location>
        <position position="139"/>
    </location>
    <ligand>
        <name>AMP</name>
        <dbReference type="ChEBI" id="CHEBI:456215"/>
    </ligand>
</feature>
<feature type="binding site" evidence="1">
    <location>
        <position position="150"/>
    </location>
    <ligand>
        <name>AMP</name>
        <dbReference type="ChEBI" id="CHEBI:456215"/>
    </ligand>
</feature>
<feature type="binding site" evidence="1">
    <location>
        <position position="178"/>
    </location>
    <ligand>
        <name>ATP</name>
        <dbReference type="ChEBI" id="CHEBI:30616"/>
    </ligand>
</feature>
<reference key="1">
    <citation type="journal article" date="2007" name="Nat. Genet.">
        <title>Genomic analysis of Bartonella identifies type IV secretion systems as host adaptability factors.</title>
        <authorList>
            <person name="Saenz H.L."/>
            <person name="Engel P."/>
            <person name="Stoeckli M.C."/>
            <person name="Lanz C."/>
            <person name="Raddatz G."/>
            <person name="Vayssier-Taussat M."/>
            <person name="Birtles R."/>
            <person name="Schuster S.C."/>
            <person name="Dehio C."/>
        </authorList>
    </citation>
    <scope>NUCLEOTIDE SEQUENCE [LARGE SCALE GENOMIC DNA]</scope>
    <source>
        <strain>CIP 105476 / IBS 506</strain>
    </source>
</reference>
<organism>
    <name type="scientific">Bartonella tribocorum (strain CIP 105476 / IBS 506)</name>
    <dbReference type="NCBI Taxonomy" id="382640"/>
    <lineage>
        <taxon>Bacteria</taxon>
        <taxon>Pseudomonadati</taxon>
        <taxon>Pseudomonadota</taxon>
        <taxon>Alphaproteobacteria</taxon>
        <taxon>Hyphomicrobiales</taxon>
        <taxon>Bartonellaceae</taxon>
        <taxon>Bartonella</taxon>
    </lineage>
</organism>
<name>KAD_BART1</name>
<comment type="function">
    <text evidence="1">Catalyzes the reversible transfer of the terminal phosphate group between ATP and AMP. Plays an important role in cellular energy homeostasis and in adenine nucleotide metabolism.</text>
</comment>
<comment type="catalytic activity">
    <reaction evidence="1">
        <text>AMP + ATP = 2 ADP</text>
        <dbReference type="Rhea" id="RHEA:12973"/>
        <dbReference type="ChEBI" id="CHEBI:30616"/>
        <dbReference type="ChEBI" id="CHEBI:456215"/>
        <dbReference type="ChEBI" id="CHEBI:456216"/>
        <dbReference type="EC" id="2.7.4.3"/>
    </reaction>
</comment>
<comment type="pathway">
    <text evidence="1">Purine metabolism; AMP biosynthesis via salvage pathway; AMP from ADP: step 1/1.</text>
</comment>
<comment type="subunit">
    <text evidence="1">Monomer.</text>
</comment>
<comment type="subcellular location">
    <subcellularLocation>
        <location evidence="1">Cytoplasm</location>
    </subcellularLocation>
</comment>
<comment type="domain">
    <text evidence="1">Consists of three domains, a large central CORE domain and two small peripheral domains, NMPbind and LID, which undergo movements during catalysis. The LID domain closes over the site of phosphoryl transfer upon ATP binding. Assembling and dissambling the active center during each catalytic cycle provides an effective means to prevent ATP hydrolysis.</text>
</comment>
<comment type="similarity">
    <text evidence="1">Belongs to the adenylate kinase family.</text>
</comment>
<proteinExistence type="inferred from homology"/>